<comment type="function">
    <text evidence="1">Catalyzes the ATP-dependent phosphorylation of N-acetyl-L-glutamate.</text>
</comment>
<comment type="catalytic activity">
    <reaction evidence="1">
        <text>N-acetyl-L-glutamate + ATP = N-acetyl-L-glutamyl 5-phosphate + ADP</text>
        <dbReference type="Rhea" id="RHEA:14629"/>
        <dbReference type="ChEBI" id="CHEBI:30616"/>
        <dbReference type="ChEBI" id="CHEBI:44337"/>
        <dbReference type="ChEBI" id="CHEBI:57936"/>
        <dbReference type="ChEBI" id="CHEBI:456216"/>
        <dbReference type="EC" id="2.7.2.8"/>
    </reaction>
</comment>
<comment type="pathway">
    <text evidence="1">Amino-acid biosynthesis; L-arginine biosynthesis; N(2)-acetyl-L-ornithine from L-glutamate: step 2/4.</text>
</comment>
<comment type="subcellular location">
    <subcellularLocation>
        <location evidence="1">Cytoplasm</location>
    </subcellularLocation>
</comment>
<comment type="similarity">
    <text evidence="1">Belongs to the acetylglutamate kinase family. ArgB subfamily.</text>
</comment>
<dbReference type="EC" id="2.7.2.8" evidence="1"/>
<dbReference type="EMBL" id="BX897699">
    <property type="protein sequence ID" value="CAF26885.1"/>
    <property type="molecule type" value="Genomic_DNA"/>
</dbReference>
<dbReference type="RefSeq" id="WP_011180030.1">
    <property type="nucleotide sequence ID" value="NZ_LRIJ02000001.1"/>
</dbReference>
<dbReference type="SMR" id="Q6G552"/>
<dbReference type="PaxDb" id="283166-BH00690"/>
<dbReference type="EnsemblBacteria" id="CAF26885">
    <property type="protein sequence ID" value="CAF26885"/>
    <property type="gene ID" value="BH00690"/>
</dbReference>
<dbReference type="GeneID" id="92986355"/>
<dbReference type="KEGG" id="bhe:BH00690"/>
<dbReference type="eggNOG" id="COG0548">
    <property type="taxonomic scope" value="Bacteria"/>
</dbReference>
<dbReference type="OrthoDB" id="9803155at2"/>
<dbReference type="UniPathway" id="UPA00068">
    <property type="reaction ID" value="UER00107"/>
</dbReference>
<dbReference type="Proteomes" id="UP000000421">
    <property type="component" value="Chromosome"/>
</dbReference>
<dbReference type="GO" id="GO:0005737">
    <property type="term" value="C:cytoplasm"/>
    <property type="evidence" value="ECO:0007669"/>
    <property type="project" value="UniProtKB-SubCell"/>
</dbReference>
<dbReference type="GO" id="GO:0003991">
    <property type="term" value="F:acetylglutamate kinase activity"/>
    <property type="evidence" value="ECO:0007669"/>
    <property type="project" value="UniProtKB-UniRule"/>
</dbReference>
<dbReference type="GO" id="GO:0005524">
    <property type="term" value="F:ATP binding"/>
    <property type="evidence" value="ECO:0007669"/>
    <property type="project" value="UniProtKB-UniRule"/>
</dbReference>
<dbReference type="GO" id="GO:0042450">
    <property type="term" value="P:arginine biosynthetic process via ornithine"/>
    <property type="evidence" value="ECO:0007669"/>
    <property type="project" value="UniProtKB-UniRule"/>
</dbReference>
<dbReference type="GO" id="GO:0006526">
    <property type="term" value="P:L-arginine biosynthetic process"/>
    <property type="evidence" value="ECO:0007669"/>
    <property type="project" value="UniProtKB-UniPathway"/>
</dbReference>
<dbReference type="CDD" id="cd04250">
    <property type="entry name" value="AAK_NAGK-C"/>
    <property type="match status" value="1"/>
</dbReference>
<dbReference type="FunFam" id="3.40.1160.10:FF:000004">
    <property type="entry name" value="Acetylglutamate kinase"/>
    <property type="match status" value="1"/>
</dbReference>
<dbReference type="Gene3D" id="3.40.1160.10">
    <property type="entry name" value="Acetylglutamate kinase-like"/>
    <property type="match status" value="1"/>
</dbReference>
<dbReference type="HAMAP" id="MF_00082">
    <property type="entry name" value="ArgB"/>
    <property type="match status" value="1"/>
</dbReference>
<dbReference type="InterPro" id="IPR036393">
    <property type="entry name" value="AceGlu_kinase-like_sf"/>
</dbReference>
<dbReference type="InterPro" id="IPR004662">
    <property type="entry name" value="AcgluKinase_fam"/>
</dbReference>
<dbReference type="InterPro" id="IPR037528">
    <property type="entry name" value="ArgB"/>
</dbReference>
<dbReference type="InterPro" id="IPR001048">
    <property type="entry name" value="Asp/Glu/Uridylate_kinase"/>
</dbReference>
<dbReference type="InterPro" id="IPR001057">
    <property type="entry name" value="Glu/AcGlu_kinase"/>
</dbReference>
<dbReference type="InterPro" id="IPR041727">
    <property type="entry name" value="NAGK-C"/>
</dbReference>
<dbReference type="NCBIfam" id="TIGR00761">
    <property type="entry name" value="argB"/>
    <property type="match status" value="1"/>
</dbReference>
<dbReference type="PANTHER" id="PTHR23342">
    <property type="entry name" value="N-ACETYLGLUTAMATE SYNTHASE"/>
    <property type="match status" value="1"/>
</dbReference>
<dbReference type="PANTHER" id="PTHR23342:SF0">
    <property type="entry name" value="N-ACETYLGLUTAMATE SYNTHASE, MITOCHONDRIAL"/>
    <property type="match status" value="1"/>
</dbReference>
<dbReference type="Pfam" id="PF00696">
    <property type="entry name" value="AA_kinase"/>
    <property type="match status" value="1"/>
</dbReference>
<dbReference type="PIRSF" id="PIRSF000728">
    <property type="entry name" value="NAGK"/>
    <property type="match status" value="1"/>
</dbReference>
<dbReference type="PRINTS" id="PR00474">
    <property type="entry name" value="GLU5KINASE"/>
</dbReference>
<dbReference type="SUPFAM" id="SSF53633">
    <property type="entry name" value="Carbamate kinase-like"/>
    <property type="match status" value="1"/>
</dbReference>
<feature type="chain" id="PRO_0000112589" description="Acetylglutamate kinase">
    <location>
        <begin position="1"/>
        <end position="301"/>
    </location>
</feature>
<feature type="binding site" evidence="1">
    <location>
        <begin position="72"/>
        <end position="73"/>
    </location>
    <ligand>
        <name>substrate</name>
    </ligand>
</feature>
<feature type="binding site" evidence="1">
    <location>
        <position position="94"/>
    </location>
    <ligand>
        <name>substrate</name>
    </ligand>
</feature>
<feature type="binding site" evidence="1">
    <location>
        <position position="199"/>
    </location>
    <ligand>
        <name>substrate</name>
    </ligand>
</feature>
<feature type="site" description="Transition state stabilizer" evidence="1">
    <location>
        <position position="37"/>
    </location>
</feature>
<feature type="site" description="Transition state stabilizer" evidence="1">
    <location>
        <position position="259"/>
    </location>
</feature>
<name>ARGB_BARHE</name>
<proteinExistence type="inferred from homology"/>
<reference key="1">
    <citation type="journal article" date="2004" name="Proc. Natl. Acad. Sci. U.S.A.">
        <title>The louse-borne human pathogen Bartonella quintana is a genomic derivative of the zoonotic agent Bartonella henselae.</title>
        <authorList>
            <person name="Alsmark U.C.M."/>
            <person name="Frank A.C."/>
            <person name="Karlberg E.O."/>
            <person name="Legault B.-A."/>
            <person name="Ardell D.H."/>
            <person name="Canbaeck B."/>
            <person name="Eriksson A.-S."/>
            <person name="Naeslund A.K."/>
            <person name="Handley S.A."/>
            <person name="Huvet M."/>
            <person name="La Scola B."/>
            <person name="Holmberg M."/>
            <person name="Andersson S.G.E."/>
        </authorList>
    </citation>
    <scope>NUCLEOTIDE SEQUENCE [LARGE SCALE GENOMIC DNA]</scope>
    <source>
        <strain>ATCC 49882 / DSM 28221 / CCUG 30454 / Houston 1</strain>
    </source>
</reference>
<gene>
    <name evidence="1" type="primary">argB</name>
    <name type="ordered locus">BH00690</name>
</gene>
<organism>
    <name type="scientific">Bartonella henselae (strain ATCC 49882 / DSM 28221 / CCUG 30454 / Houston 1)</name>
    <name type="common">Rochalimaea henselae</name>
    <dbReference type="NCBI Taxonomy" id="283166"/>
    <lineage>
        <taxon>Bacteria</taxon>
        <taxon>Pseudomonadati</taxon>
        <taxon>Pseudomonadota</taxon>
        <taxon>Alphaproteobacteria</taxon>
        <taxon>Hyphomicrobiales</taxon>
        <taxon>Bartonellaceae</taxon>
        <taxon>Bartonella</taxon>
    </lineage>
</organism>
<keyword id="KW-0028">Amino-acid biosynthesis</keyword>
<keyword id="KW-0055">Arginine biosynthesis</keyword>
<keyword id="KW-0067">ATP-binding</keyword>
<keyword id="KW-0963">Cytoplasm</keyword>
<keyword id="KW-0418">Kinase</keyword>
<keyword id="KW-0547">Nucleotide-binding</keyword>
<keyword id="KW-0808">Transferase</keyword>
<sequence length="301" mass="32256">MDDVENGVADVFEKQAAFLSSALPYMQKYENETVVVKYGGHAMGDPALGRAFARDIALLKQSGINPVVVHGGGPQIAEILMKMGIESRFENGLRVTDERIVEVVEMVLAGSINKEIVALINAEGEWAIGLCGKDGNMVFAEKAYKTVIDPDSHIERVLDLGFVGEPVEVDRTLLDLLACSEMIPVLAPVAPGRDGKTYNINADIFAGAIAGALEAKRLLFLTDVPGVLDKKGKLLKELTISEAENLIKNETISGGMIPKVETCMKALQNGVEAVVILNGRTPHSVLLELFTEQGAGTLIVS</sequence>
<accession>Q6G552</accession>
<evidence type="ECO:0000255" key="1">
    <source>
        <dbReference type="HAMAP-Rule" id="MF_00082"/>
    </source>
</evidence>
<protein>
    <recommendedName>
        <fullName evidence="1">Acetylglutamate kinase</fullName>
        <ecNumber evidence="1">2.7.2.8</ecNumber>
    </recommendedName>
    <alternativeName>
        <fullName evidence="1">N-acetyl-L-glutamate 5-phosphotransferase</fullName>
    </alternativeName>
    <alternativeName>
        <fullName evidence="1">NAG kinase</fullName>
        <shortName evidence="1">NAGK</shortName>
    </alternativeName>
</protein>